<reference key="1">
    <citation type="journal article" date="2005" name="J. Bacteriol.">
        <title>Swine and poultry pathogens: the complete genome sequences of two strains of Mycoplasma hyopneumoniae and a strain of Mycoplasma synoviae.</title>
        <authorList>
            <person name="Vasconcelos A.T.R."/>
            <person name="Ferreira H.B."/>
            <person name="Bizarro C.V."/>
            <person name="Bonatto S.L."/>
            <person name="Carvalho M.O."/>
            <person name="Pinto P.M."/>
            <person name="Almeida D.F."/>
            <person name="Almeida L.G.P."/>
            <person name="Almeida R."/>
            <person name="Alves-Junior L."/>
            <person name="Assuncao E.N."/>
            <person name="Azevedo V.A.C."/>
            <person name="Bogo M.R."/>
            <person name="Brigido M.M."/>
            <person name="Brocchi M."/>
            <person name="Burity H.A."/>
            <person name="Camargo A.A."/>
            <person name="Camargo S.S."/>
            <person name="Carepo M.S."/>
            <person name="Carraro D.M."/>
            <person name="de Mattos Cascardo J.C."/>
            <person name="Castro L.A."/>
            <person name="Cavalcanti G."/>
            <person name="Chemale G."/>
            <person name="Collevatti R.G."/>
            <person name="Cunha C.W."/>
            <person name="Dallagiovanna B."/>
            <person name="Dambros B.P."/>
            <person name="Dellagostin O.A."/>
            <person name="Falcao C."/>
            <person name="Fantinatti-Garboggini F."/>
            <person name="Felipe M.S.S."/>
            <person name="Fiorentin L."/>
            <person name="Franco G.R."/>
            <person name="Freitas N.S.A."/>
            <person name="Frias D."/>
            <person name="Grangeiro T.B."/>
            <person name="Grisard E.C."/>
            <person name="Guimaraes C.T."/>
            <person name="Hungria M."/>
            <person name="Jardim S.N."/>
            <person name="Krieger M.A."/>
            <person name="Laurino J.P."/>
            <person name="Lima L.F.A."/>
            <person name="Lopes M.I."/>
            <person name="Loreto E.L.S."/>
            <person name="Madeira H.M.F."/>
            <person name="Manfio G.P."/>
            <person name="Maranhao A.Q."/>
            <person name="Martinkovics C.T."/>
            <person name="Medeiros S.R.B."/>
            <person name="Moreira M.A.M."/>
            <person name="Neiva M."/>
            <person name="Ramalho-Neto C.E."/>
            <person name="Nicolas M.F."/>
            <person name="Oliveira S.C."/>
            <person name="Paixao R.F.C."/>
            <person name="Pedrosa F.O."/>
            <person name="Pena S.D.J."/>
            <person name="Pereira M."/>
            <person name="Pereira-Ferrari L."/>
            <person name="Piffer I."/>
            <person name="Pinto L.S."/>
            <person name="Potrich D.P."/>
            <person name="Salim A.C.M."/>
            <person name="Santos F.R."/>
            <person name="Schmitt R."/>
            <person name="Schneider M.P.C."/>
            <person name="Schrank A."/>
            <person name="Schrank I.S."/>
            <person name="Schuck A.F."/>
            <person name="Seuanez H.N."/>
            <person name="Silva D.W."/>
            <person name="Silva R."/>
            <person name="Silva S.C."/>
            <person name="Soares C.M.A."/>
            <person name="Souza K.R.L."/>
            <person name="Souza R.C."/>
            <person name="Staats C.C."/>
            <person name="Steffens M.B.R."/>
            <person name="Teixeira S.M.R."/>
            <person name="Urmenyi T.P."/>
            <person name="Vainstein M.H."/>
            <person name="Zuccherato L.W."/>
            <person name="Simpson A.J.G."/>
            <person name="Zaha A."/>
        </authorList>
    </citation>
    <scope>NUCLEOTIDE SEQUENCE [LARGE SCALE GENOMIC DNA]</scope>
    <source>
        <strain>7448</strain>
    </source>
</reference>
<dbReference type="EMBL" id="AE017244">
    <property type="protein sequence ID" value="AAZ53541.1"/>
    <property type="molecule type" value="Genomic_DNA"/>
</dbReference>
<dbReference type="RefSeq" id="WP_011290053.1">
    <property type="nucleotide sequence ID" value="NC_007332.1"/>
</dbReference>
<dbReference type="SMR" id="Q4A8J8"/>
<dbReference type="KEGG" id="mhp:MHP7448_0167"/>
<dbReference type="HOGENOM" id="CLU_074407_2_2_14"/>
<dbReference type="Proteomes" id="UP000000553">
    <property type="component" value="Chromosome"/>
</dbReference>
<dbReference type="GO" id="GO:0022625">
    <property type="term" value="C:cytosolic large ribosomal subunit"/>
    <property type="evidence" value="ECO:0007669"/>
    <property type="project" value="TreeGrafter"/>
</dbReference>
<dbReference type="GO" id="GO:0003735">
    <property type="term" value="F:structural constituent of ribosome"/>
    <property type="evidence" value="ECO:0007669"/>
    <property type="project" value="InterPro"/>
</dbReference>
<dbReference type="GO" id="GO:0006412">
    <property type="term" value="P:translation"/>
    <property type="evidence" value="ECO:0007669"/>
    <property type="project" value="UniProtKB-UniRule"/>
</dbReference>
<dbReference type="Gene3D" id="3.90.1030.10">
    <property type="entry name" value="Ribosomal protein L17"/>
    <property type="match status" value="1"/>
</dbReference>
<dbReference type="HAMAP" id="MF_01368">
    <property type="entry name" value="Ribosomal_bL17"/>
    <property type="match status" value="1"/>
</dbReference>
<dbReference type="InterPro" id="IPR000456">
    <property type="entry name" value="Ribosomal_bL17"/>
</dbReference>
<dbReference type="InterPro" id="IPR047859">
    <property type="entry name" value="Ribosomal_bL17_CS"/>
</dbReference>
<dbReference type="InterPro" id="IPR036373">
    <property type="entry name" value="Ribosomal_bL17_sf"/>
</dbReference>
<dbReference type="NCBIfam" id="TIGR00059">
    <property type="entry name" value="L17"/>
    <property type="match status" value="1"/>
</dbReference>
<dbReference type="PANTHER" id="PTHR14413:SF16">
    <property type="entry name" value="LARGE RIBOSOMAL SUBUNIT PROTEIN BL17M"/>
    <property type="match status" value="1"/>
</dbReference>
<dbReference type="PANTHER" id="PTHR14413">
    <property type="entry name" value="RIBOSOMAL PROTEIN L17"/>
    <property type="match status" value="1"/>
</dbReference>
<dbReference type="Pfam" id="PF01196">
    <property type="entry name" value="Ribosomal_L17"/>
    <property type="match status" value="1"/>
</dbReference>
<dbReference type="SUPFAM" id="SSF64263">
    <property type="entry name" value="Prokaryotic ribosomal protein L17"/>
    <property type="match status" value="1"/>
</dbReference>
<dbReference type="PROSITE" id="PS01167">
    <property type="entry name" value="RIBOSOMAL_L17"/>
    <property type="match status" value="1"/>
</dbReference>
<evidence type="ECO:0000255" key="1">
    <source>
        <dbReference type="HAMAP-Rule" id="MF_01368"/>
    </source>
</evidence>
<evidence type="ECO:0000305" key="2"/>
<proteinExistence type="inferred from homology"/>
<keyword id="KW-0687">Ribonucleoprotein</keyword>
<keyword id="KW-0689">Ribosomal protein</keyword>
<organism>
    <name type="scientific">Mesomycoplasma hyopneumoniae (strain 7448)</name>
    <name type="common">Mycoplasma hyopneumoniae</name>
    <dbReference type="NCBI Taxonomy" id="262722"/>
    <lineage>
        <taxon>Bacteria</taxon>
        <taxon>Bacillati</taxon>
        <taxon>Mycoplasmatota</taxon>
        <taxon>Mycoplasmoidales</taxon>
        <taxon>Metamycoplasmataceae</taxon>
        <taxon>Mesomycoplasma</taxon>
    </lineage>
</organism>
<accession>Q4A8J8</accession>
<comment type="subunit">
    <text evidence="1">Part of the 50S ribosomal subunit. Contacts protein L32.</text>
</comment>
<comment type="similarity">
    <text evidence="1">Belongs to the bacterial ribosomal protein bL17 family.</text>
</comment>
<gene>
    <name evidence="1" type="primary">rplQ</name>
    <name type="ordered locus">MHP7448_0167</name>
</gene>
<protein>
    <recommendedName>
        <fullName evidence="1">Large ribosomal subunit protein bL17</fullName>
    </recommendedName>
    <alternativeName>
        <fullName evidence="2">50S ribosomal protein L17</fullName>
    </alternativeName>
</protein>
<sequence length="120" mass="13843">MANPHQIYRHDAAWDRQVFRSLATSLILHGHIKTTLDRAKRLRSVVEKLITKAKKNDLAARRQILSFLYGQKTKAGIKVMPYLFNKVAPRYQERNGGYTRIVRIPSRLGDNSKMAIIELV</sequence>
<name>RL17_MESH7</name>
<feature type="chain" id="PRO_1000055874" description="Large ribosomal subunit protein bL17">
    <location>
        <begin position="1"/>
        <end position="120"/>
    </location>
</feature>